<keyword id="KW-0012">Acyltransferase</keyword>
<keyword id="KW-0028">Amino-acid biosynthesis</keyword>
<keyword id="KW-0055">Arginine biosynthesis</keyword>
<keyword id="KW-0963">Cytoplasm</keyword>
<keyword id="KW-1185">Reference proteome</keyword>
<keyword id="KW-0808">Transferase</keyword>
<protein>
    <recommendedName>
        <fullName>Amino-acid acetyltransferase</fullName>
        <ecNumber>2.3.1.1</ecNumber>
    </recommendedName>
    <alternativeName>
        <fullName>N-acetylglutamate synthase</fullName>
        <shortName>AGS</shortName>
        <shortName>NAGS</shortName>
    </alternativeName>
</protein>
<name>ARGA_PSEAE</name>
<organism>
    <name type="scientific">Pseudomonas aeruginosa (strain ATCC 15692 / DSM 22644 / CIP 104116 / JCM 14847 / LMG 12228 / 1C / PRS 101 / PAO1)</name>
    <dbReference type="NCBI Taxonomy" id="208964"/>
    <lineage>
        <taxon>Bacteria</taxon>
        <taxon>Pseudomonadati</taxon>
        <taxon>Pseudomonadota</taxon>
        <taxon>Gammaproteobacteria</taxon>
        <taxon>Pseudomonadales</taxon>
        <taxon>Pseudomonadaceae</taxon>
        <taxon>Pseudomonas</taxon>
    </lineage>
</organism>
<feature type="chain" id="PRO_0000186798" description="Amino-acid acetyltransferase">
    <location>
        <begin position="1"/>
        <end position="432"/>
    </location>
</feature>
<feature type="domain" description="N-acetyltransferase">
    <location>
        <begin position="286"/>
        <end position="425"/>
    </location>
</feature>
<reference key="1">
    <citation type="submission" date="1991-02" db="EMBL/GenBank/DDBJ databases">
        <authorList>
            <person name="Dharmsthiti S."/>
            <person name="Krishnapillai V.V."/>
        </authorList>
    </citation>
    <scope>NUCLEOTIDE SEQUENCE [GENOMIC DNA]</scope>
    <source>
        <strain>PAO</strain>
    </source>
</reference>
<reference key="2">
    <citation type="journal article" date="2000" name="Nature">
        <title>Complete genome sequence of Pseudomonas aeruginosa PAO1, an opportunistic pathogen.</title>
        <authorList>
            <person name="Stover C.K."/>
            <person name="Pham X.-Q.T."/>
            <person name="Erwin A.L."/>
            <person name="Mizoguchi S.D."/>
            <person name="Warrener P."/>
            <person name="Hickey M.J."/>
            <person name="Brinkman F.S.L."/>
            <person name="Hufnagle W.O."/>
            <person name="Kowalik D.J."/>
            <person name="Lagrou M."/>
            <person name="Garber R.L."/>
            <person name="Goltry L."/>
            <person name="Tolentino E."/>
            <person name="Westbrock-Wadman S."/>
            <person name="Yuan Y."/>
            <person name="Brody L.L."/>
            <person name="Coulter S.N."/>
            <person name="Folger K.R."/>
            <person name="Kas A."/>
            <person name="Larbig K."/>
            <person name="Lim R.M."/>
            <person name="Smith K.A."/>
            <person name="Spencer D.H."/>
            <person name="Wong G.K.-S."/>
            <person name="Wu Z."/>
            <person name="Paulsen I.T."/>
            <person name="Reizer J."/>
            <person name="Saier M.H. Jr."/>
            <person name="Hancock R.E.W."/>
            <person name="Lory S."/>
            <person name="Olson M.V."/>
        </authorList>
    </citation>
    <scope>NUCLEOTIDE SEQUENCE [LARGE SCALE GENOMIC DNA]</scope>
    <source>
        <strain>ATCC 15692 / DSM 22644 / CIP 104116 / JCM 14847 / LMG 12228 / 1C / PRS 101 / PAO1</strain>
    </source>
</reference>
<evidence type="ECO:0000250" key="1"/>
<evidence type="ECO:0000305" key="2"/>
<proteinExistence type="evidence at protein level"/>
<comment type="catalytic activity">
    <reaction>
        <text>L-glutamate + acetyl-CoA = N-acetyl-L-glutamate + CoA + H(+)</text>
        <dbReference type="Rhea" id="RHEA:24292"/>
        <dbReference type="ChEBI" id="CHEBI:15378"/>
        <dbReference type="ChEBI" id="CHEBI:29985"/>
        <dbReference type="ChEBI" id="CHEBI:44337"/>
        <dbReference type="ChEBI" id="CHEBI:57287"/>
        <dbReference type="ChEBI" id="CHEBI:57288"/>
        <dbReference type="EC" id="2.3.1.1"/>
    </reaction>
</comment>
<comment type="pathway">
    <text>Amino-acid biosynthesis; L-arginine biosynthesis; N(2)-acetyl-L-ornithine from L-glutamate: step 1/4.</text>
</comment>
<comment type="interaction">
    <interactant intactId="EBI-6418319">
        <id>P22567</id>
    </interactant>
    <interactant intactId="EBI-6418319">
        <id>P22567</id>
        <label>argA</label>
    </interactant>
    <organismsDiffer>false</organismsDiffer>
    <experiments>2</experiments>
</comment>
<comment type="subcellular location">
    <subcellularLocation>
        <location evidence="1">Cytoplasm</location>
    </subcellularLocation>
</comment>
<comment type="similarity">
    <text evidence="2">Belongs to the acetyltransferase family. ArgA subfamily.</text>
</comment>
<comment type="sequence caution" evidence="2">
    <conflict type="frameshift">
        <sequence resource="EMBL-CDS" id="AAA73977"/>
    </conflict>
</comment>
<sequence length="432" mass="47859">MPDYVNWLRHASPYINSHRDRTFVVMLPGEGVEHPNFGNIVHDLVLLHSLGARLVLVHGSRPQIEARLAARGLAPRYHRDLRVTDAPTLECVIDAVGSLRIAIEARLSMDMAASPMQGARLRVAGGNLVTARPIGVVEGVDYHHTGEVRRIDRKGIGRLLDERSIVLLSPLGYSPTGEIFNLACEDVAMRAAIDLEAEKLILYGAEQGLLDASGKLVRELRPQQVPAHLQRLGNSYQAELLDAAAQACRAGVKRSHIVSYTEDGALLSELFTRTGNGTLVAQEQFEQLREAGIEDVGGLIELIRPLEEQGILVRRSREVLEREIEQFSIVEREGLIIACAALYPIADSEAGELACLAVNPEYRHGGRGDELLERIEERARGLGLKTLFVLTTRTAHWFRERGFQPSSVERLPAARASLYNFQRNSQVFEKSL</sequence>
<gene>
    <name type="primary">argA</name>
    <name type="ordered locus">PA5204</name>
</gene>
<dbReference type="EC" id="2.3.1.1"/>
<dbReference type="EMBL" id="M38358">
    <property type="protein sequence ID" value="AAA73977.1"/>
    <property type="status" value="ALT_FRAME"/>
    <property type="molecule type" value="Genomic_DNA"/>
</dbReference>
<dbReference type="EMBL" id="AE004091">
    <property type="protein sequence ID" value="AAG08589.1"/>
    <property type="molecule type" value="Genomic_DNA"/>
</dbReference>
<dbReference type="PIR" id="G82995">
    <property type="entry name" value="G82995"/>
</dbReference>
<dbReference type="PIR" id="S27600">
    <property type="entry name" value="S27600"/>
</dbReference>
<dbReference type="RefSeq" id="NP_253891.1">
    <property type="nucleotide sequence ID" value="NC_002516.2"/>
</dbReference>
<dbReference type="RefSeq" id="WP_003096265.1">
    <property type="nucleotide sequence ID" value="NZ_QZGE01000002.1"/>
</dbReference>
<dbReference type="SMR" id="P22567"/>
<dbReference type="FunCoup" id="P22567">
    <property type="interactions" value="147"/>
</dbReference>
<dbReference type="STRING" id="208964.PA5204"/>
<dbReference type="PaxDb" id="208964-PA5204"/>
<dbReference type="GeneID" id="879475"/>
<dbReference type="KEGG" id="pae:PA5204"/>
<dbReference type="PATRIC" id="fig|208964.12.peg.5454"/>
<dbReference type="PseudoCAP" id="PA5204"/>
<dbReference type="HOGENOM" id="CLU_024773_0_0_6"/>
<dbReference type="InParanoid" id="P22567"/>
<dbReference type="OrthoDB" id="9802238at2"/>
<dbReference type="PhylomeDB" id="P22567"/>
<dbReference type="BioCyc" id="PAER208964:G1FZ6-5323-MONOMER"/>
<dbReference type="BRENDA" id="2.3.1.1">
    <property type="organism ID" value="5087"/>
</dbReference>
<dbReference type="UniPathway" id="UPA00068">
    <property type="reaction ID" value="UER00106"/>
</dbReference>
<dbReference type="Proteomes" id="UP000002438">
    <property type="component" value="Chromosome"/>
</dbReference>
<dbReference type="GO" id="GO:0005737">
    <property type="term" value="C:cytoplasm"/>
    <property type="evidence" value="ECO:0007669"/>
    <property type="project" value="UniProtKB-SubCell"/>
</dbReference>
<dbReference type="GO" id="GO:0004358">
    <property type="term" value="F:glutamate N-acetyltransferase activity"/>
    <property type="evidence" value="ECO:0000315"/>
    <property type="project" value="PseudoCAP"/>
</dbReference>
<dbReference type="GO" id="GO:0042802">
    <property type="term" value="F:identical protein binding"/>
    <property type="evidence" value="ECO:0000353"/>
    <property type="project" value="IntAct"/>
</dbReference>
<dbReference type="GO" id="GO:0004042">
    <property type="term" value="F:L-glutamate N-acetyltransferase activity"/>
    <property type="evidence" value="ECO:0007669"/>
    <property type="project" value="UniProtKB-UniRule"/>
</dbReference>
<dbReference type="GO" id="GO:0006526">
    <property type="term" value="P:L-arginine biosynthetic process"/>
    <property type="evidence" value="ECO:0000315"/>
    <property type="project" value="PseudoCAP"/>
</dbReference>
<dbReference type="CDD" id="cd04237">
    <property type="entry name" value="AAK_NAGS-ABP"/>
    <property type="match status" value="1"/>
</dbReference>
<dbReference type="CDD" id="cd04301">
    <property type="entry name" value="NAT_SF"/>
    <property type="match status" value="1"/>
</dbReference>
<dbReference type="FunFam" id="3.40.1160.10:FF:000005">
    <property type="entry name" value="Amino-acid acetyltransferase"/>
    <property type="match status" value="1"/>
</dbReference>
<dbReference type="Gene3D" id="3.40.630.30">
    <property type="match status" value="1"/>
</dbReference>
<dbReference type="Gene3D" id="3.40.1160.10">
    <property type="entry name" value="Acetylglutamate kinase-like"/>
    <property type="match status" value="1"/>
</dbReference>
<dbReference type="HAMAP" id="MF_01105">
    <property type="entry name" value="N_acetyl_glu_synth"/>
    <property type="match status" value="1"/>
</dbReference>
<dbReference type="InterPro" id="IPR036393">
    <property type="entry name" value="AceGlu_kinase-like_sf"/>
</dbReference>
<dbReference type="InterPro" id="IPR016181">
    <property type="entry name" value="Acyl_CoA_acyltransferase"/>
</dbReference>
<dbReference type="InterPro" id="IPR001048">
    <property type="entry name" value="Asp/Glu/Uridylate_kinase"/>
</dbReference>
<dbReference type="InterPro" id="IPR000182">
    <property type="entry name" value="GNAT_dom"/>
</dbReference>
<dbReference type="InterPro" id="IPR033719">
    <property type="entry name" value="NAGS_kin"/>
</dbReference>
<dbReference type="InterPro" id="IPR010167">
    <property type="entry name" value="NH2A_AcTrfase"/>
</dbReference>
<dbReference type="NCBIfam" id="TIGR01890">
    <property type="entry name" value="N-Ac-Glu-synth"/>
    <property type="match status" value="1"/>
</dbReference>
<dbReference type="NCBIfam" id="NF003641">
    <property type="entry name" value="PRK05279.1"/>
    <property type="match status" value="1"/>
</dbReference>
<dbReference type="PANTHER" id="PTHR30602">
    <property type="entry name" value="AMINO-ACID ACETYLTRANSFERASE"/>
    <property type="match status" value="1"/>
</dbReference>
<dbReference type="PANTHER" id="PTHR30602:SF12">
    <property type="entry name" value="AMINO-ACID ACETYLTRANSFERASE NAGS1, CHLOROPLASTIC-RELATED"/>
    <property type="match status" value="1"/>
</dbReference>
<dbReference type="Pfam" id="PF00696">
    <property type="entry name" value="AA_kinase"/>
    <property type="match status" value="1"/>
</dbReference>
<dbReference type="Pfam" id="PF00583">
    <property type="entry name" value="Acetyltransf_1"/>
    <property type="match status" value="1"/>
</dbReference>
<dbReference type="PIRSF" id="PIRSF000423">
    <property type="entry name" value="ArgA"/>
    <property type="match status" value="1"/>
</dbReference>
<dbReference type="SUPFAM" id="SSF55729">
    <property type="entry name" value="Acyl-CoA N-acyltransferases (Nat)"/>
    <property type="match status" value="1"/>
</dbReference>
<dbReference type="SUPFAM" id="SSF53633">
    <property type="entry name" value="Carbamate kinase-like"/>
    <property type="match status" value="1"/>
</dbReference>
<dbReference type="PROSITE" id="PS51186">
    <property type="entry name" value="GNAT"/>
    <property type="match status" value="1"/>
</dbReference>
<accession>P22567</accession>